<name>MSCL_STACT</name>
<proteinExistence type="inferred from homology"/>
<comment type="function">
    <text evidence="1">Channel that opens in response to stretch forces in the membrane lipid bilayer. May participate in the regulation of osmotic pressure changes within the cell.</text>
</comment>
<comment type="subunit">
    <text evidence="1">Homopentamer.</text>
</comment>
<comment type="subcellular location">
    <subcellularLocation>
        <location evidence="1">Cell membrane</location>
        <topology evidence="1">Multi-pass membrane protein</topology>
    </subcellularLocation>
</comment>
<comment type="similarity">
    <text evidence="1">Belongs to the MscL family.</text>
</comment>
<organism>
    <name type="scientific">Staphylococcus carnosus (strain TM300)</name>
    <dbReference type="NCBI Taxonomy" id="396513"/>
    <lineage>
        <taxon>Bacteria</taxon>
        <taxon>Bacillati</taxon>
        <taxon>Bacillota</taxon>
        <taxon>Bacilli</taxon>
        <taxon>Bacillales</taxon>
        <taxon>Staphylococcaceae</taxon>
        <taxon>Staphylococcus</taxon>
    </lineage>
</organism>
<evidence type="ECO:0000255" key="1">
    <source>
        <dbReference type="HAMAP-Rule" id="MF_00115"/>
    </source>
</evidence>
<protein>
    <recommendedName>
        <fullName evidence="1">Large-conductance mechanosensitive channel</fullName>
    </recommendedName>
</protein>
<accession>B9DP78</accession>
<dbReference type="EMBL" id="AM295250">
    <property type="protein sequence ID" value="CAL27897.1"/>
    <property type="molecule type" value="Genomic_DNA"/>
</dbReference>
<dbReference type="RefSeq" id="WP_015900238.1">
    <property type="nucleotide sequence ID" value="NC_012121.1"/>
</dbReference>
<dbReference type="SMR" id="B9DP78"/>
<dbReference type="GeneID" id="93793415"/>
<dbReference type="KEGG" id="sca:SCA_0989"/>
<dbReference type="eggNOG" id="COG1970">
    <property type="taxonomic scope" value="Bacteria"/>
</dbReference>
<dbReference type="HOGENOM" id="CLU_095787_0_0_9"/>
<dbReference type="OrthoDB" id="9810350at2"/>
<dbReference type="BioCyc" id="SCAR396513:SCA_RS04965-MONOMER"/>
<dbReference type="Proteomes" id="UP000000444">
    <property type="component" value="Chromosome"/>
</dbReference>
<dbReference type="GO" id="GO:0005886">
    <property type="term" value="C:plasma membrane"/>
    <property type="evidence" value="ECO:0007669"/>
    <property type="project" value="UniProtKB-SubCell"/>
</dbReference>
<dbReference type="GO" id="GO:0008381">
    <property type="term" value="F:mechanosensitive monoatomic ion channel activity"/>
    <property type="evidence" value="ECO:0007669"/>
    <property type="project" value="UniProtKB-UniRule"/>
</dbReference>
<dbReference type="Gene3D" id="1.10.1200.120">
    <property type="entry name" value="Large-conductance mechanosensitive channel, MscL, domain 1"/>
    <property type="match status" value="1"/>
</dbReference>
<dbReference type="HAMAP" id="MF_00115">
    <property type="entry name" value="MscL"/>
    <property type="match status" value="1"/>
</dbReference>
<dbReference type="InterPro" id="IPR019823">
    <property type="entry name" value="Mechanosensitive_channel_CS"/>
</dbReference>
<dbReference type="InterPro" id="IPR001185">
    <property type="entry name" value="MS_channel"/>
</dbReference>
<dbReference type="InterPro" id="IPR037673">
    <property type="entry name" value="MSC/AndL"/>
</dbReference>
<dbReference type="InterPro" id="IPR036019">
    <property type="entry name" value="MscL_channel"/>
</dbReference>
<dbReference type="NCBIfam" id="TIGR00220">
    <property type="entry name" value="mscL"/>
    <property type="match status" value="1"/>
</dbReference>
<dbReference type="NCBIfam" id="NF010559">
    <property type="entry name" value="PRK13954.1"/>
    <property type="match status" value="1"/>
</dbReference>
<dbReference type="PANTHER" id="PTHR30266:SF2">
    <property type="entry name" value="LARGE-CONDUCTANCE MECHANOSENSITIVE CHANNEL"/>
    <property type="match status" value="1"/>
</dbReference>
<dbReference type="PANTHER" id="PTHR30266">
    <property type="entry name" value="MECHANOSENSITIVE CHANNEL MSCL"/>
    <property type="match status" value="1"/>
</dbReference>
<dbReference type="Pfam" id="PF01741">
    <property type="entry name" value="MscL"/>
    <property type="match status" value="1"/>
</dbReference>
<dbReference type="PRINTS" id="PR01264">
    <property type="entry name" value="MECHCHANNEL"/>
</dbReference>
<dbReference type="SUPFAM" id="SSF81330">
    <property type="entry name" value="Gated mechanosensitive channel"/>
    <property type="match status" value="1"/>
</dbReference>
<dbReference type="PROSITE" id="PS01327">
    <property type="entry name" value="MSCL"/>
    <property type="match status" value="1"/>
</dbReference>
<gene>
    <name evidence="1" type="primary">mscL</name>
    <name type="ordered locus">Sca_0989</name>
</gene>
<keyword id="KW-1003">Cell membrane</keyword>
<keyword id="KW-0407">Ion channel</keyword>
<keyword id="KW-0406">Ion transport</keyword>
<keyword id="KW-0472">Membrane</keyword>
<keyword id="KW-1185">Reference proteome</keyword>
<keyword id="KW-0812">Transmembrane</keyword>
<keyword id="KW-1133">Transmembrane helix</keyword>
<keyword id="KW-0813">Transport</keyword>
<reference key="1">
    <citation type="journal article" date="2009" name="Appl. Environ. Microbiol.">
        <title>Genome analysis of the meat starter culture bacterium Staphylococcus carnosus TM300.</title>
        <authorList>
            <person name="Rosenstein R."/>
            <person name="Nerz C."/>
            <person name="Biswas L."/>
            <person name="Resch A."/>
            <person name="Raddatz G."/>
            <person name="Schuster S.C."/>
            <person name="Goetz F."/>
        </authorList>
    </citation>
    <scope>NUCLEOTIDE SEQUENCE [LARGE SCALE GENOMIC DNA]</scope>
    <source>
        <strain>TM300</strain>
    </source>
</reference>
<sequence>MFKEFKEFAFKGNVLDLAVAVVMGAAFNKIITSLVTYIIMPLIGLIFGTVDFAKNWSFMGIKYGLFVQSVIDFLIVAFALFLFVKLANTLMRKEEVEEEPEENIVLLTEIRDLLQQQNGTVTNETTNIFTETDDVDNKKF</sequence>
<feature type="chain" id="PRO_1000191386" description="Large-conductance mechanosensitive channel">
    <location>
        <begin position="1"/>
        <end position="140"/>
    </location>
</feature>
<feature type="transmembrane region" description="Helical" evidence="1">
    <location>
        <begin position="7"/>
        <end position="27"/>
    </location>
</feature>
<feature type="transmembrane region" description="Helical" evidence="1">
    <location>
        <begin position="30"/>
        <end position="50"/>
    </location>
</feature>
<feature type="transmembrane region" description="Helical" evidence="1">
    <location>
        <begin position="64"/>
        <end position="84"/>
    </location>
</feature>